<gene>
    <name type="primary">Rrs1</name>
</gene>
<name>RRS1_RAT</name>
<dbReference type="EMBL" id="BC128746">
    <property type="protein sequence ID" value="AAI28747.1"/>
    <property type="molecule type" value="mRNA"/>
</dbReference>
<dbReference type="RefSeq" id="NP_001073167.1">
    <property type="nucleotide sequence ID" value="NM_001079699.1"/>
</dbReference>
<dbReference type="SMR" id="A1A5P2"/>
<dbReference type="FunCoup" id="A1A5P2">
    <property type="interactions" value="2654"/>
</dbReference>
<dbReference type="STRING" id="10116.ENSRNOP00000009482"/>
<dbReference type="iPTMnet" id="A1A5P2"/>
<dbReference type="PhosphoSitePlus" id="A1A5P2"/>
<dbReference type="PaxDb" id="10116-ENSRNOP00000009482"/>
<dbReference type="PeptideAtlas" id="A1A5P2"/>
<dbReference type="Ensembl" id="ENSRNOT00000009482.6">
    <property type="protein sequence ID" value="ENSRNOP00000009482.3"/>
    <property type="gene ID" value="ENSRNOG00000007240.6"/>
</dbReference>
<dbReference type="GeneID" id="297784"/>
<dbReference type="KEGG" id="rno:297784"/>
<dbReference type="UCSC" id="RGD:1311403">
    <property type="organism name" value="rat"/>
</dbReference>
<dbReference type="AGR" id="RGD:1311403"/>
<dbReference type="CTD" id="23212"/>
<dbReference type="RGD" id="1311403">
    <property type="gene designation" value="Rrs1"/>
</dbReference>
<dbReference type="eggNOG" id="KOG1765">
    <property type="taxonomic scope" value="Eukaryota"/>
</dbReference>
<dbReference type="GeneTree" id="ENSGT00390000005213"/>
<dbReference type="HOGENOM" id="CLU_065163_1_0_1"/>
<dbReference type="InParanoid" id="A1A5P2"/>
<dbReference type="OMA" id="ACDKNRI"/>
<dbReference type="OrthoDB" id="67814at9989"/>
<dbReference type="PhylomeDB" id="A1A5P2"/>
<dbReference type="TreeFam" id="TF313067"/>
<dbReference type="PRO" id="PR:A1A5P2"/>
<dbReference type="Proteomes" id="UP000002494">
    <property type="component" value="Chromosome 5"/>
</dbReference>
<dbReference type="Bgee" id="ENSRNOG00000007240">
    <property type="expression patterns" value="Expressed in thymus and 20 other cell types or tissues"/>
</dbReference>
<dbReference type="GO" id="GO:0000794">
    <property type="term" value="C:condensed nuclear chromosome"/>
    <property type="evidence" value="ECO:0000266"/>
    <property type="project" value="RGD"/>
</dbReference>
<dbReference type="GO" id="GO:0005783">
    <property type="term" value="C:endoplasmic reticulum"/>
    <property type="evidence" value="ECO:0000266"/>
    <property type="project" value="RGD"/>
</dbReference>
<dbReference type="GO" id="GO:0005730">
    <property type="term" value="C:nucleolus"/>
    <property type="evidence" value="ECO:0000266"/>
    <property type="project" value="RGD"/>
</dbReference>
<dbReference type="GO" id="GO:0030687">
    <property type="term" value="C:preribosome, large subunit precursor"/>
    <property type="evidence" value="ECO:0000318"/>
    <property type="project" value="GO_Central"/>
</dbReference>
<dbReference type="GO" id="GO:0008097">
    <property type="term" value="F:5S rRNA binding"/>
    <property type="evidence" value="ECO:0000250"/>
    <property type="project" value="UniProtKB"/>
</dbReference>
<dbReference type="GO" id="GO:0000447">
    <property type="term" value="P:endonucleolytic cleavage in ITS1 to separate SSU-rRNA from 5.8S rRNA and LSU-rRNA from tricistronic rRNA transcript (SSU-rRNA, 5.8S rRNA, LSU-rRNA)"/>
    <property type="evidence" value="ECO:0000318"/>
    <property type="project" value="GO_Central"/>
</dbReference>
<dbReference type="GO" id="GO:0002244">
    <property type="term" value="P:hematopoietic progenitor cell differentiation"/>
    <property type="evidence" value="ECO:0000266"/>
    <property type="project" value="RGD"/>
</dbReference>
<dbReference type="GO" id="GO:0007080">
    <property type="term" value="P:mitotic metaphase chromosome alignment"/>
    <property type="evidence" value="ECO:0000266"/>
    <property type="project" value="RGD"/>
</dbReference>
<dbReference type="GO" id="GO:1902570">
    <property type="term" value="P:protein localization to nucleolus"/>
    <property type="evidence" value="ECO:0000250"/>
    <property type="project" value="UniProtKB"/>
</dbReference>
<dbReference type="GO" id="GO:1901796">
    <property type="term" value="P:regulation of signal transduction by p53 class mediator"/>
    <property type="evidence" value="ECO:0000250"/>
    <property type="project" value="UniProtKB"/>
</dbReference>
<dbReference type="GO" id="GO:0000027">
    <property type="term" value="P:ribosomal large subunit assembly"/>
    <property type="evidence" value="ECO:0000250"/>
    <property type="project" value="UniProtKB"/>
</dbReference>
<dbReference type="GO" id="GO:0042273">
    <property type="term" value="P:ribosomal large subunit biogenesis"/>
    <property type="evidence" value="ECO:0000266"/>
    <property type="project" value="RGD"/>
</dbReference>
<dbReference type="InterPro" id="IPR007023">
    <property type="entry name" value="Ribosom_reg"/>
</dbReference>
<dbReference type="PANTHER" id="PTHR17602">
    <property type="entry name" value="RIBOSOME BIOGENESIS REGULATORY PROTEIN"/>
    <property type="match status" value="1"/>
</dbReference>
<dbReference type="PANTHER" id="PTHR17602:SF4">
    <property type="entry name" value="RIBOSOME BIOGENESIS REGULATORY PROTEIN HOMOLOG"/>
    <property type="match status" value="1"/>
</dbReference>
<dbReference type="Pfam" id="PF04939">
    <property type="entry name" value="RRS1"/>
    <property type="match status" value="1"/>
</dbReference>
<evidence type="ECO:0000250" key="1">
    <source>
        <dbReference type="UniProtKB" id="Q15050"/>
    </source>
</evidence>
<evidence type="ECO:0000250" key="2">
    <source>
        <dbReference type="UniProtKB" id="Q9CYH6"/>
    </source>
</evidence>
<evidence type="ECO:0000256" key="3">
    <source>
        <dbReference type="SAM" id="MobiDB-lite"/>
    </source>
</evidence>
<evidence type="ECO:0000305" key="4"/>
<accession>A1A5P2</accession>
<organism>
    <name type="scientific">Rattus norvegicus</name>
    <name type="common">Rat</name>
    <dbReference type="NCBI Taxonomy" id="10116"/>
    <lineage>
        <taxon>Eukaryota</taxon>
        <taxon>Metazoa</taxon>
        <taxon>Chordata</taxon>
        <taxon>Craniata</taxon>
        <taxon>Vertebrata</taxon>
        <taxon>Euteleostomi</taxon>
        <taxon>Mammalia</taxon>
        <taxon>Eutheria</taxon>
        <taxon>Euarchontoglires</taxon>
        <taxon>Glires</taxon>
        <taxon>Rodentia</taxon>
        <taxon>Myomorpha</taxon>
        <taxon>Muroidea</taxon>
        <taxon>Muridae</taxon>
        <taxon>Murinae</taxon>
        <taxon>Rattus</taxon>
    </lineage>
</organism>
<reference key="1">
    <citation type="journal article" date="2004" name="Genome Res.">
        <title>The status, quality, and expansion of the NIH full-length cDNA project: the Mammalian Gene Collection (MGC).</title>
        <authorList>
            <consortium name="The MGC Project Team"/>
        </authorList>
    </citation>
    <scope>NUCLEOTIDE SEQUENCE [LARGE SCALE MRNA]</scope>
    <source>
        <tissue>Lung</tissue>
    </source>
</reference>
<sequence length="365" mass="41537">MEGQSVEELLAKAKQEEAEKLQRITVHKELELEFDLGNLLASDRNPPTVLRQAGPSPEAELRALARDNTQLLVNQLWQLPTERVEEAVVARLPEPATRLPREKPLPRPRPLTRWQQFARLKGIRPKKKTNLVWDEVSGQWRRRWGYKRARDDTKEWLIEVPGSADPMEDQFAKRIRAKKERVAKNELNRLRNLARAHKMQMPSSAGLHPTGHQSKEELGRAMQVAKVSTASVGRFQERLPKEKAPRGSGKKRKFQPLFGDFAAEKKNQLELLRVMNSKKPQLDVTRATNKQMREEDQEEAAKRRKMSQKGKKKGGRQGPSGRRKGGPPSQGEKRKGVLGGKKHSRPPALGGKKKGVPHHGGKRRK</sequence>
<proteinExistence type="evidence at transcript level"/>
<comment type="function">
    <text evidence="1">Involved in ribosomal large subunit assembly. May regulate the localization of the 5S RNP/5S ribonucleoprotein particle to the nucleolus.</text>
</comment>
<comment type="subunit">
    <text evidence="1">Component of a hexameric 5S RNP precursor complex, composed of 5S RNA, RRS1, RPF2/BXDC1, RPL5, RPL11 and HEATR3; this complex acts as a precursor for ribosome assembly.</text>
</comment>
<comment type="subcellular location">
    <subcellularLocation>
        <location evidence="1">Nucleus</location>
        <location evidence="1">Nucleolus</location>
    </subcellularLocation>
</comment>
<comment type="PTM">
    <text evidence="2">Citrullinated by PADI4.</text>
</comment>
<comment type="similarity">
    <text evidence="4">Belongs to the RRS1 family.</text>
</comment>
<feature type="chain" id="PRO_0000327746" description="Ribosome biogenesis regulatory protein homolog">
    <location>
        <begin position="1"/>
        <end position="365"/>
    </location>
</feature>
<feature type="region of interest" description="Disordered" evidence="3">
    <location>
        <begin position="200"/>
        <end position="255"/>
    </location>
</feature>
<feature type="region of interest" description="Disordered" evidence="3">
    <location>
        <begin position="272"/>
        <end position="365"/>
    </location>
</feature>
<feature type="compositionally biased region" description="Basic and acidic residues" evidence="3">
    <location>
        <begin position="235"/>
        <end position="245"/>
    </location>
</feature>
<feature type="compositionally biased region" description="Basic residues" evidence="3">
    <location>
        <begin position="302"/>
        <end position="325"/>
    </location>
</feature>
<feature type="compositionally biased region" description="Basic residues" evidence="3">
    <location>
        <begin position="340"/>
        <end position="365"/>
    </location>
</feature>
<feature type="modified residue" description="N-acetylmethionine" evidence="1">
    <location>
        <position position="1"/>
    </location>
</feature>
<feature type="modified residue" description="Phosphoserine" evidence="1">
    <location>
        <position position="5"/>
    </location>
</feature>
<feature type="modified residue" description="Citrulline" evidence="2">
    <location>
        <position position="273"/>
    </location>
</feature>
<feature type="cross-link" description="Glycyl lysine isopeptide (Lys-Gly) (interchain with G-Cter in SUMO2)" evidence="1">
    <location>
        <position position="154"/>
    </location>
</feature>
<feature type="cross-link" description="Glycyl lysine isopeptide (Lys-Gly) (interchain with G-Cter in SUMO2)" evidence="1">
    <location>
        <position position="226"/>
    </location>
</feature>
<feature type="cross-link" description="Glycyl lysine isopeptide (Lys-Gly) (interchain with G-Cter in SUMO2)" evidence="1">
    <location>
        <position position="266"/>
    </location>
</feature>
<protein>
    <recommendedName>
        <fullName>Ribosome biogenesis regulatory protein homolog</fullName>
    </recommendedName>
</protein>
<keyword id="KW-0007">Acetylation</keyword>
<keyword id="KW-0164">Citrullination</keyword>
<keyword id="KW-1017">Isopeptide bond</keyword>
<keyword id="KW-0539">Nucleus</keyword>
<keyword id="KW-0597">Phosphoprotein</keyword>
<keyword id="KW-1185">Reference proteome</keyword>
<keyword id="KW-0690">Ribosome biogenesis</keyword>
<keyword id="KW-0832">Ubl conjugation</keyword>